<feature type="chain" id="PRO_1000193542" description="Peptide chain release factor 3">
    <location>
        <begin position="1"/>
        <end position="531"/>
    </location>
</feature>
<feature type="domain" description="tr-type G">
    <location>
        <begin position="10"/>
        <end position="278"/>
    </location>
</feature>
<feature type="binding site" evidence="1">
    <location>
        <begin position="19"/>
        <end position="26"/>
    </location>
    <ligand>
        <name>GTP</name>
        <dbReference type="ChEBI" id="CHEBI:37565"/>
    </ligand>
</feature>
<feature type="binding site" evidence="1">
    <location>
        <begin position="87"/>
        <end position="91"/>
    </location>
    <ligand>
        <name>GTP</name>
        <dbReference type="ChEBI" id="CHEBI:37565"/>
    </ligand>
</feature>
<feature type="binding site" evidence="1">
    <location>
        <begin position="141"/>
        <end position="144"/>
    </location>
    <ligand>
        <name>GTP</name>
        <dbReference type="ChEBI" id="CHEBI:37565"/>
    </ligand>
</feature>
<comment type="function">
    <text evidence="1">Increases the formation of ribosomal termination complexes and stimulates activities of RF-1 and RF-2. It binds guanine nucleotides and has strong preference for UGA stop codons. It may interact directly with the ribosome. The stimulation of RF-1 and RF-2 is significantly reduced by GTP and GDP, but not by GMP.</text>
</comment>
<comment type="subcellular location">
    <subcellularLocation>
        <location evidence="1">Cytoplasm</location>
    </subcellularLocation>
</comment>
<comment type="similarity">
    <text evidence="1">Belongs to the TRAFAC class translation factor GTPase superfamily. Classic translation factor GTPase family. PrfC subfamily.</text>
</comment>
<gene>
    <name evidence="1" type="primary">prfC</name>
    <name type="ordered locus">Tgr7_2146</name>
</gene>
<proteinExistence type="inferred from homology"/>
<sequence>MSSKHATETARRRTFAIISHPDAGKTTITEKLLLFGGAIQLAGTVKGRKAARHATSDWMELEKQRGISVTSSVMQFPYKGRIVNLLDTPGHEDFSEDTYRTLTAVDSALMVIDVAKGVEERTIKLMDVCRMRDTPIMTFINKLDREGREPIDLLDEVEQVLKIQCAPVTWPIGMGKRFKGVYHIHNDAVHLYSPTHGGKIQHGEVIQGLDNPRLDELLGGQAAELREELELVMGASHSFDKAEYLAGRQTPVFFGSAINNFGVQELLDDFVEHAPGPLPRATESRTVDPAEETFSGFVFKIQANMDPQHRDRIAFLRVCSGTFSKGMKVHQVRIKRDVKISDALTFMASDREHVEEAYPGDIIGLHNHGTIRIGDTFTQGEQLIFTGIPNFAPELFRRAHLRDPLKMKQLQKGLQQLCEEGATQLFKPLTNNDLILGAVGVLQFDVVAHRLKAEYNVDASFENVNVQTARWVSCDNARKFEEFQEKAAANLAIDHGGDLVYIAPTRVNLQMAQEKWPEVRFHATREHGVAA</sequence>
<reference key="1">
    <citation type="journal article" date="2011" name="Stand. Genomic Sci.">
        <title>Complete genome sequence of 'Thioalkalivibrio sulfidophilus' HL-EbGr7.</title>
        <authorList>
            <person name="Muyzer G."/>
            <person name="Sorokin D.Y."/>
            <person name="Mavromatis K."/>
            <person name="Lapidus A."/>
            <person name="Clum A."/>
            <person name="Ivanova N."/>
            <person name="Pati A."/>
            <person name="d'Haeseleer P."/>
            <person name="Woyke T."/>
            <person name="Kyrpides N.C."/>
        </authorList>
    </citation>
    <scope>NUCLEOTIDE SEQUENCE [LARGE SCALE GENOMIC DNA]</scope>
    <source>
        <strain>HL-EbGR7</strain>
    </source>
</reference>
<keyword id="KW-0963">Cytoplasm</keyword>
<keyword id="KW-0342">GTP-binding</keyword>
<keyword id="KW-0547">Nucleotide-binding</keyword>
<keyword id="KW-0648">Protein biosynthesis</keyword>
<keyword id="KW-1185">Reference proteome</keyword>
<dbReference type="EMBL" id="CP001339">
    <property type="protein sequence ID" value="ACL73226.1"/>
    <property type="molecule type" value="Genomic_DNA"/>
</dbReference>
<dbReference type="RefSeq" id="WP_012638704.1">
    <property type="nucleotide sequence ID" value="NC_011901.1"/>
</dbReference>
<dbReference type="SMR" id="B8GTY2"/>
<dbReference type="STRING" id="396588.Tgr7_2146"/>
<dbReference type="KEGG" id="tgr:Tgr7_2146"/>
<dbReference type="eggNOG" id="COG4108">
    <property type="taxonomic scope" value="Bacteria"/>
</dbReference>
<dbReference type="HOGENOM" id="CLU_002794_2_1_6"/>
<dbReference type="OrthoDB" id="9804431at2"/>
<dbReference type="Proteomes" id="UP000002383">
    <property type="component" value="Chromosome"/>
</dbReference>
<dbReference type="GO" id="GO:0005829">
    <property type="term" value="C:cytosol"/>
    <property type="evidence" value="ECO:0007669"/>
    <property type="project" value="TreeGrafter"/>
</dbReference>
<dbReference type="GO" id="GO:0005525">
    <property type="term" value="F:GTP binding"/>
    <property type="evidence" value="ECO:0007669"/>
    <property type="project" value="UniProtKB-UniRule"/>
</dbReference>
<dbReference type="GO" id="GO:0003924">
    <property type="term" value="F:GTPase activity"/>
    <property type="evidence" value="ECO:0007669"/>
    <property type="project" value="InterPro"/>
</dbReference>
<dbReference type="GO" id="GO:0097216">
    <property type="term" value="F:guanosine tetraphosphate binding"/>
    <property type="evidence" value="ECO:0007669"/>
    <property type="project" value="UniProtKB-ARBA"/>
</dbReference>
<dbReference type="GO" id="GO:0016150">
    <property type="term" value="F:translation release factor activity, codon nonspecific"/>
    <property type="evidence" value="ECO:0007669"/>
    <property type="project" value="TreeGrafter"/>
</dbReference>
<dbReference type="GO" id="GO:0016149">
    <property type="term" value="F:translation release factor activity, codon specific"/>
    <property type="evidence" value="ECO:0007669"/>
    <property type="project" value="UniProtKB-UniRule"/>
</dbReference>
<dbReference type="GO" id="GO:0006449">
    <property type="term" value="P:regulation of translational termination"/>
    <property type="evidence" value="ECO:0007669"/>
    <property type="project" value="UniProtKB-UniRule"/>
</dbReference>
<dbReference type="CDD" id="cd04169">
    <property type="entry name" value="RF3"/>
    <property type="match status" value="1"/>
</dbReference>
<dbReference type="CDD" id="cd03689">
    <property type="entry name" value="RF3_II"/>
    <property type="match status" value="1"/>
</dbReference>
<dbReference type="CDD" id="cd16259">
    <property type="entry name" value="RF3_III"/>
    <property type="match status" value="1"/>
</dbReference>
<dbReference type="FunFam" id="2.40.30.10:FF:000040">
    <property type="entry name" value="Peptide chain release factor 3"/>
    <property type="match status" value="1"/>
</dbReference>
<dbReference type="FunFam" id="3.30.70.3280:FF:000001">
    <property type="entry name" value="Peptide chain release factor 3"/>
    <property type="match status" value="1"/>
</dbReference>
<dbReference type="FunFam" id="3.40.50.300:FF:000542">
    <property type="entry name" value="Peptide chain release factor 3"/>
    <property type="match status" value="1"/>
</dbReference>
<dbReference type="Gene3D" id="3.40.50.300">
    <property type="entry name" value="P-loop containing nucleotide triphosphate hydrolases"/>
    <property type="match status" value="2"/>
</dbReference>
<dbReference type="Gene3D" id="3.30.70.3280">
    <property type="entry name" value="Peptide chain release factor 3, domain III"/>
    <property type="match status" value="1"/>
</dbReference>
<dbReference type="HAMAP" id="MF_00072">
    <property type="entry name" value="Rel_fac_3"/>
    <property type="match status" value="1"/>
</dbReference>
<dbReference type="InterPro" id="IPR053905">
    <property type="entry name" value="EF-G-like_DII"/>
</dbReference>
<dbReference type="InterPro" id="IPR035647">
    <property type="entry name" value="EFG_III/V"/>
</dbReference>
<dbReference type="InterPro" id="IPR031157">
    <property type="entry name" value="G_TR_CS"/>
</dbReference>
<dbReference type="InterPro" id="IPR027417">
    <property type="entry name" value="P-loop_NTPase"/>
</dbReference>
<dbReference type="InterPro" id="IPR004548">
    <property type="entry name" value="PrfC"/>
</dbReference>
<dbReference type="InterPro" id="IPR032090">
    <property type="entry name" value="RF3_C"/>
</dbReference>
<dbReference type="InterPro" id="IPR038467">
    <property type="entry name" value="RF3_dom_3_sf"/>
</dbReference>
<dbReference type="InterPro" id="IPR041732">
    <property type="entry name" value="RF3_GTP-bd"/>
</dbReference>
<dbReference type="InterPro" id="IPR005225">
    <property type="entry name" value="Small_GTP-bd"/>
</dbReference>
<dbReference type="InterPro" id="IPR000795">
    <property type="entry name" value="T_Tr_GTP-bd_dom"/>
</dbReference>
<dbReference type="InterPro" id="IPR009000">
    <property type="entry name" value="Transl_B-barrel_sf"/>
</dbReference>
<dbReference type="NCBIfam" id="TIGR00503">
    <property type="entry name" value="prfC"/>
    <property type="match status" value="1"/>
</dbReference>
<dbReference type="NCBIfam" id="NF001964">
    <property type="entry name" value="PRK00741.1"/>
    <property type="match status" value="1"/>
</dbReference>
<dbReference type="NCBIfam" id="TIGR00231">
    <property type="entry name" value="small_GTP"/>
    <property type="match status" value="1"/>
</dbReference>
<dbReference type="PANTHER" id="PTHR43556">
    <property type="entry name" value="PEPTIDE CHAIN RELEASE FACTOR RF3"/>
    <property type="match status" value="1"/>
</dbReference>
<dbReference type="PANTHER" id="PTHR43556:SF2">
    <property type="entry name" value="PEPTIDE CHAIN RELEASE FACTOR RF3"/>
    <property type="match status" value="1"/>
</dbReference>
<dbReference type="Pfam" id="PF22042">
    <property type="entry name" value="EF-G_D2"/>
    <property type="match status" value="1"/>
</dbReference>
<dbReference type="Pfam" id="PF00009">
    <property type="entry name" value="GTP_EFTU"/>
    <property type="match status" value="1"/>
</dbReference>
<dbReference type="Pfam" id="PF16658">
    <property type="entry name" value="RF3_C"/>
    <property type="match status" value="1"/>
</dbReference>
<dbReference type="PRINTS" id="PR00315">
    <property type="entry name" value="ELONGATNFCT"/>
</dbReference>
<dbReference type="SUPFAM" id="SSF54980">
    <property type="entry name" value="EF-G C-terminal domain-like"/>
    <property type="match status" value="1"/>
</dbReference>
<dbReference type="SUPFAM" id="SSF52540">
    <property type="entry name" value="P-loop containing nucleoside triphosphate hydrolases"/>
    <property type="match status" value="1"/>
</dbReference>
<dbReference type="SUPFAM" id="SSF50447">
    <property type="entry name" value="Translation proteins"/>
    <property type="match status" value="1"/>
</dbReference>
<dbReference type="PROSITE" id="PS00301">
    <property type="entry name" value="G_TR_1"/>
    <property type="match status" value="1"/>
</dbReference>
<dbReference type="PROSITE" id="PS51722">
    <property type="entry name" value="G_TR_2"/>
    <property type="match status" value="1"/>
</dbReference>
<protein>
    <recommendedName>
        <fullName evidence="1">Peptide chain release factor 3</fullName>
        <shortName evidence="1">RF-3</shortName>
    </recommendedName>
</protein>
<accession>B8GTY2</accession>
<evidence type="ECO:0000255" key="1">
    <source>
        <dbReference type="HAMAP-Rule" id="MF_00072"/>
    </source>
</evidence>
<organism>
    <name type="scientific">Thioalkalivibrio sulfidiphilus (strain HL-EbGR7)</name>
    <dbReference type="NCBI Taxonomy" id="396588"/>
    <lineage>
        <taxon>Bacteria</taxon>
        <taxon>Pseudomonadati</taxon>
        <taxon>Pseudomonadota</taxon>
        <taxon>Gammaproteobacteria</taxon>
        <taxon>Chromatiales</taxon>
        <taxon>Ectothiorhodospiraceae</taxon>
        <taxon>Thioalkalivibrio</taxon>
    </lineage>
</organism>
<name>RF3_THISH</name>